<feature type="chain" id="PRO_0000236519" description="Large ribosomal subunit protein bL9">
    <location>
        <begin position="1"/>
        <end position="167"/>
    </location>
</feature>
<keyword id="KW-1185">Reference proteome</keyword>
<keyword id="KW-0687">Ribonucleoprotein</keyword>
<keyword id="KW-0689">Ribosomal protein</keyword>
<keyword id="KW-0694">RNA-binding</keyword>
<keyword id="KW-0699">rRNA-binding</keyword>
<evidence type="ECO:0000255" key="1">
    <source>
        <dbReference type="HAMAP-Rule" id="MF_00503"/>
    </source>
</evidence>
<evidence type="ECO:0000305" key="2"/>
<protein>
    <recommendedName>
        <fullName evidence="1">Large ribosomal subunit protein bL9</fullName>
    </recommendedName>
    <alternativeName>
        <fullName evidence="2">50S ribosomal protein L9</fullName>
    </alternativeName>
</protein>
<sequence>MKIILRADVENLGRLGDVVTVKPGFGRNYLLPQGLGMLASQANLKAFELERKKLQARMDALRNAAADIAAKLEGLVLAIPMRVGENDKLYGSVTTAIIGDGLAAQGIEVDRRRILLDSAIRALGEYPVRVRLHADVTAEILVKVVSEDKVNDVAESAPAEEPEAAAE</sequence>
<accession>Q72DH1</accession>
<gene>
    <name evidence="1" type="primary">rplI</name>
    <name type="ordered locus">DVU_0958</name>
</gene>
<organism>
    <name type="scientific">Nitratidesulfovibrio vulgaris (strain ATCC 29579 / DSM 644 / CCUG 34227 / NCIMB 8303 / VKM B-1760 / Hildenborough)</name>
    <name type="common">Desulfovibrio vulgaris</name>
    <dbReference type="NCBI Taxonomy" id="882"/>
    <lineage>
        <taxon>Bacteria</taxon>
        <taxon>Pseudomonadati</taxon>
        <taxon>Thermodesulfobacteriota</taxon>
        <taxon>Desulfovibrionia</taxon>
        <taxon>Desulfovibrionales</taxon>
        <taxon>Desulfovibrionaceae</taxon>
        <taxon>Nitratidesulfovibrio</taxon>
    </lineage>
</organism>
<reference key="1">
    <citation type="journal article" date="2004" name="Nat. Biotechnol.">
        <title>The genome sequence of the anaerobic, sulfate-reducing bacterium Desulfovibrio vulgaris Hildenborough.</title>
        <authorList>
            <person name="Heidelberg J.F."/>
            <person name="Seshadri R."/>
            <person name="Haveman S.A."/>
            <person name="Hemme C.L."/>
            <person name="Paulsen I.T."/>
            <person name="Kolonay J.F."/>
            <person name="Eisen J.A."/>
            <person name="Ward N.L."/>
            <person name="Methe B.A."/>
            <person name="Brinkac L.M."/>
            <person name="Daugherty S.C."/>
            <person name="DeBoy R.T."/>
            <person name="Dodson R.J."/>
            <person name="Durkin A.S."/>
            <person name="Madupu R."/>
            <person name="Nelson W.C."/>
            <person name="Sullivan S.A."/>
            <person name="Fouts D.E."/>
            <person name="Haft D.H."/>
            <person name="Selengut J."/>
            <person name="Peterson J.D."/>
            <person name="Davidsen T.M."/>
            <person name="Zafar N."/>
            <person name="Zhou L."/>
            <person name="Radune D."/>
            <person name="Dimitrov G."/>
            <person name="Hance M."/>
            <person name="Tran K."/>
            <person name="Khouri H.M."/>
            <person name="Gill J."/>
            <person name="Utterback T.R."/>
            <person name="Feldblyum T.V."/>
            <person name="Wall J.D."/>
            <person name="Voordouw G."/>
            <person name="Fraser C.M."/>
        </authorList>
    </citation>
    <scope>NUCLEOTIDE SEQUENCE [LARGE SCALE GENOMIC DNA]</scope>
    <source>
        <strain>ATCC 29579 / DSM 644 / CCUG 34227 / NCIMB 8303 / VKM B-1760 / Hildenborough</strain>
    </source>
</reference>
<proteinExistence type="inferred from homology"/>
<dbReference type="EMBL" id="AE017285">
    <property type="protein sequence ID" value="AAS95438.1"/>
    <property type="molecule type" value="Genomic_DNA"/>
</dbReference>
<dbReference type="RefSeq" id="WP_010938257.1">
    <property type="nucleotide sequence ID" value="NC_002937.3"/>
</dbReference>
<dbReference type="RefSeq" id="YP_010179.1">
    <property type="nucleotide sequence ID" value="NC_002937.3"/>
</dbReference>
<dbReference type="SMR" id="Q72DH1"/>
<dbReference type="STRING" id="882.DVU_0958"/>
<dbReference type="PaxDb" id="882-DVU_0958"/>
<dbReference type="EnsemblBacteria" id="AAS95438">
    <property type="protein sequence ID" value="AAS95438"/>
    <property type="gene ID" value="DVU_0958"/>
</dbReference>
<dbReference type="KEGG" id="dvu:DVU_0958"/>
<dbReference type="PATRIC" id="fig|882.5.peg.902"/>
<dbReference type="eggNOG" id="COG0359">
    <property type="taxonomic scope" value="Bacteria"/>
</dbReference>
<dbReference type="HOGENOM" id="CLU_078938_3_0_7"/>
<dbReference type="OrthoDB" id="9788336at2"/>
<dbReference type="PhylomeDB" id="Q72DH1"/>
<dbReference type="Proteomes" id="UP000002194">
    <property type="component" value="Chromosome"/>
</dbReference>
<dbReference type="GO" id="GO:1990904">
    <property type="term" value="C:ribonucleoprotein complex"/>
    <property type="evidence" value="ECO:0007669"/>
    <property type="project" value="UniProtKB-KW"/>
</dbReference>
<dbReference type="GO" id="GO:0005840">
    <property type="term" value="C:ribosome"/>
    <property type="evidence" value="ECO:0007669"/>
    <property type="project" value="UniProtKB-KW"/>
</dbReference>
<dbReference type="GO" id="GO:0019843">
    <property type="term" value="F:rRNA binding"/>
    <property type="evidence" value="ECO:0007669"/>
    <property type="project" value="UniProtKB-UniRule"/>
</dbReference>
<dbReference type="GO" id="GO:0003735">
    <property type="term" value="F:structural constituent of ribosome"/>
    <property type="evidence" value="ECO:0007669"/>
    <property type="project" value="InterPro"/>
</dbReference>
<dbReference type="GO" id="GO:0006412">
    <property type="term" value="P:translation"/>
    <property type="evidence" value="ECO:0007669"/>
    <property type="project" value="UniProtKB-UniRule"/>
</dbReference>
<dbReference type="FunFam" id="3.40.5.10:FF:000003">
    <property type="entry name" value="50S ribosomal protein L9"/>
    <property type="match status" value="1"/>
</dbReference>
<dbReference type="Gene3D" id="3.10.430.100">
    <property type="entry name" value="Ribosomal protein L9, C-terminal domain"/>
    <property type="match status" value="1"/>
</dbReference>
<dbReference type="Gene3D" id="3.40.5.10">
    <property type="entry name" value="Ribosomal protein L9, N-terminal domain"/>
    <property type="match status" value="1"/>
</dbReference>
<dbReference type="HAMAP" id="MF_00503">
    <property type="entry name" value="Ribosomal_bL9"/>
    <property type="match status" value="1"/>
</dbReference>
<dbReference type="InterPro" id="IPR000244">
    <property type="entry name" value="Ribosomal_bL9"/>
</dbReference>
<dbReference type="InterPro" id="IPR009027">
    <property type="entry name" value="Ribosomal_bL9/RNase_H1_N"/>
</dbReference>
<dbReference type="InterPro" id="IPR020594">
    <property type="entry name" value="Ribosomal_bL9_bac/chp"/>
</dbReference>
<dbReference type="InterPro" id="IPR020069">
    <property type="entry name" value="Ribosomal_bL9_C"/>
</dbReference>
<dbReference type="InterPro" id="IPR036791">
    <property type="entry name" value="Ribosomal_bL9_C_sf"/>
</dbReference>
<dbReference type="InterPro" id="IPR020070">
    <property type="entry name" value="Ribosomal_bL9_N"/>
</dbReference>
<dbReference type="InterPro" id="IPR036935">
    <property type="entry name" value="Ribosomal_bL9_N_sf"/>
</dbReference>
<dbReference type="NCBIfam" id="TIGR00158">
    <property type="entry name" value="L9"/>
    <property type="match status" value="1"/>
</dbReference>
<dbReference type="PANTHER" id="PTHR21368">
    <property type="entry name" value="50S RIBOSOMAL PROTEIN L9"/>
    <property type="match status" value="1"/>
</dbReference>
<dbReference type="Pfam" id="PF03948">
    <property type="entry name" value="Ribosomal_L9_C"/>
    <property type="match status" value="1"/>
</dbReference>
<dbReference type="Pfam" id="PF01281">
    <property type="entry name" value="Ribosomal_L9_N"/>
    <property type="match status" value="1"/>
</dbReference>
<dbReference type="SUPFAM" id="SSF55658">
    <property type="entry name" value="L9 N-domain-like"/>
    <property type="match status" value="1"/>
</dbReference>
<dbReference type="SUPFAM" id="SSF55653">
    <property type="entry name" value="Ribosomal protein L9 C-domain"/>
    <property type="match status" value="1"/>
</dbReference>
<dbReference type="PROSITE" id="PS00651">
    <property type="entry name" value="RIBOSOMAL_L9"/>
    <property type="match status" value="1"/>
</dbReference>
<comment type="function">
    <text evidence="1">Binds to the 23S rRNA.</text>
</comment>
<comment type="similarity">
    <text evidence="1">Belongs to the bacterial ribosomal protein bL9 family.</text>
</comment>
<name>RL9_NITV2</name>